<protein>
    <recommendedName>
        <fullName>Hemoglobin subunit epsilon</fullName>
    </recommendedName>
    <alternativeName>
        <fullName>Epsilon-globin</fullName>
    </alternativeName>
    <alternativeName>
        <fullName>Hemoglobin epsilon chain</fullName>
    </alternativeName>
</protein>
<gene>
    <name type="primary">HBE1</name>
</gene>
<keyword id="KW-0349">Heme</keyword>
<keyword id="KW-0408">Iron</keyword>
<keyword id="KW-0479">Metal-binding</keyword>
<keyword id="KW-0561">Oxygen transport</keyword>
<keyword id="KW-0597">Phosphoprotein</keyword>
<keyword id="KW-1185">Reference proteome</keyword>
<keyword id="KW-0813">Transport</keyword>
<proteinExistence type="evidence at transcript level"/>
<name>HBE_MICMU</name>
<evidence type="ECO:0000250" key="1">
    <source>
        <dbReference type="UniProtKB" id="P02100"/>
    </source>
</evidence>
<evidence type="ECO:0000255" key="2">
    <source>
        <dbReference type="PROSITE-ProRule" id="PRU00238"/>
    </source>
</evidence>
<organism>
    <name type="scientific">Microcebus murinus</name>
    <name type="common">Gray mouse lemur</name>
    <name type="synonym">Lemur murinus</name>
    <dbReference type="NCBI Taxonomy" id="30608"/>
    <lineage>
        <taxon>Eukaryota</taxon>
        <taxon>Metazoa</taxon>
        <taxon>Chordata</taxon>
        <taxon>Craniata</taxon>
        <taxon>Vertebrata</taxon>
        <taxon>Euteleostomi</taxon>
        <taxon>Mammalia</taxon>
        <taxon>Eutheria</taxon>
        <taxon>Euarchontoglires</taxon>
        <taxon>Primates</taxon>
        <taxon>Strepsirrhini</taxon>
        <taxon>Lemuriformes</taxon>
        <taxon>Cheirogaleidae</taxon>
        <taxon>Microcebus</taxon>
    </lineage>
</organism>
<sequence length="147" mass="16147">MVHFTAEEKSTILSLWGKVNVEEAGGEALGRLLVVYPWTQRFFDSFGNLSSASAIMGNPKVKAHGKKVLTSFGEAVKNLDNLKPAFAKLSELHCDKLHVDPENFKLLGNVMVIILATHFGKEFTPDVQAAWQKLVSGVATALAHKYH</sequence>
<feature type="chain" id="PRO_0000053218" description="Hemoglobin subunit epsilon">
    <location>
        <begin position="1"/>
        <end position="147"/>
    </location>
</feature>
<feature type="domain" description="Globin" evidence="2">
    <location>
        <begin position="3"/>
        <end position="147"/>
    </location>
</feature>
<feature type="binding site" description="distal binding residue" evidence="2">
    <location>
        <position position="64"/>
    </location>
    <ligand>
        <name>heme b</name>
        <dbReference type="ChEBI" id="CHEBI:60344"/>
    </ligand>
    <ligandPart>
        <name>Fe</name>
        <dbReference type="ChEBI" id="CHEBI:18248"/>
    </ligandPart>
</feature>
<feature type="binding site" description="proximal binding residue" evidence="2">
    <location>
        <position position="93"/>
    </location>
    <ligand>
        <name>heme b</name>
        <dbReference type="ChEBI" id="CHEBI:60344"/>
    </ligand>
    <ligandPart>
        <name>Fe</name>
        <dbReference type="ChEBI" id="CHEBI:18248"/>
    </ligandPart>
</feature>
<feature type="modified residue" description="Phosphoserine" evidence="1">
    <location>
        <position position="14"/>
    </location>
</feature>
<feature type="modified residue" description="Phosphoserine" evidence="1">
    <location>
        <position position="51"/>
    </location>
</feature>
<dbReference type="EMBL" id="U11713">
    <property type="protein sequence ID" value="AAA80180.1"/>
    <property type="molecule type" value="Genomic_DNA"/>
</dbReference>
<dbReference type="PIR" id="I84437">
    <property type="entry name" value="I84437"/>
</dbReference>
<dbReference type="SMR" id="Q28496"/>
<dbReference type="Proteomes" id="UP000694394">
    <property type="component" value="Unplaced"/>
</dbReference>
<dbReference type="GO" id="GO:0072562">
    <property type="term" value="C:blood microparticle"/>
    <property type="evidence" value="ECO:0007669"/>
    <property type="project" value="TreeGrafter"/>
</dbReference>
<dbReference type="GO" id="GO:0031838">
    <property type="term" value="C:haptoglobin-hemoglobin complex"/>
    <property type="evidence" value="ECO:0007669"/>
    <property type="project" value="TreeGrafter"/>
</dbReference>
<dbReference type="GO" id="GO:0005833">
    <property type="term" value="C:hemoglobin complex"/>
    <property type="evidence" value="ECO:0007669"/>
    <property type="project" value="InterPro"/>
</dbReference>
<dbReference type="GO" id="GO:0031720">
    <property type="term" value="F:haptoglobin binding"/>
    <property type="evidence" value="ECO:0007669"/>
    <property type="project" value="TreeGrafter"/>
</dbReference>
<dbReference type="GO" id="GO:0020037">
    <property type="term" value="F:heme binding"/>
    <property type="evidence" value="ECO:0007669"/>
    <property type="project" value="InterPro"/>
</dbReference>
<dbReference type="GO" id="GO:0031721">
    <property type="term" value="F:hemoglobin alpha binding"/>
    <property type="evidence" value="ECO:0007669"/>
    <property type="project" value="TreeGrafter"/>
</dbReference>
<dbReference type="GO" id="GO:0046872">
    <property type="term" value="F:metal ion binding"/>
    <property type="evidence" value="ECO:0007669"/>
    <property type="project" value="UniProtKB-KW"/>
</dbReference>
<dbReference type="GO" id="GO:0043177">
    <property type="term" value="F:organic acid binding"/>
    <property type="evidence" value="ECO:0007669"/>
    <property type="project" value="TreeGrafter"/>
</dbReference>
<dbReference type="GO" id="GO:0019825">
    <property type="term" value="F:oxygen binding"/>
    <property type="evidence" value="ECO:0007669"/>
    <property type="project" value="InterPro"/>
</dbReference>
<dbReference type="GO" id="GO:0005344">
    <property type="term" value="F:oxygen carrier activity"/>
    <property type="evidence" value="ECO:0007669"/>
    <property type="project" value="UniProtKB-KW"/>
</dbReference>
<dbReference type="GO" id="GO:0004601">
    <property type="term" value="F:peroxidase activity"/>
    <property type="evidence" value="ECO:0007669"/>
    <property type="project" value="TreeGrafter"/>
</dbReference>
<dbReference type="GO" id="GO:0042744">
    <property type="term" value="P:hydrogen peroxide catabolic process"/>
    <property type="evidence" value="ECO:0007669"/>
    <property type="project" value="TreeGrafter"/>
</dbReference>
<dbReference type="CDD" id="cd08925">
    <property type="entry name" value="Hb-beta-like"/>
    <property type="match status" value="1"/>
</dbReference>
<dbReference type="FunFam" id="1.10.490.10:FF:000001">
    <property type="entry name" value="Hemoglobin subunit beta"/>
    <property type="match status" value="1"/>
</dbReference>
<dbReference type="Gene3D" id="1.10.490.10">
    <property type="entry name" value="Globins"/>
    <property type="match status" value="1"/>
</dbReference>
<dbReference type="InterPro" id="IPR000971">
    <property type="entry name" value="Globin"/>
</dbReference>
<dbReference type="InterPro" id="IPR009050">
    <property type="entry name" value="Globin-like_sf"/>
</dbReference>
<dbReference type="InterPro" id="IPR012292">
    <property type="entry name" value="Globin/Proto"/>
</dbReference>
<dbReference type="InterPro" id="IPR002337">
    <property type="entry name" value="Hemoglobin_b"/>
</dbReference>
<dbReference type="InterPro" id="IPR050056">
    <property type="entry name" value="Hemoglobin_oxygen_transport"/>
</dbReference>
<dbReference type="PANTHER" id="PTHR11442">
    <property type="entry name" value="HEMOGLOBIN FAMILY MEMBER"/>
    <property type="match status" value="1"/>
</dbReference>
<dbReference type="PANTHER" id="PTHR11442:SF7">
    <property type="entry name" value="HEMOGLOBIN SUBUNIT EPSILON"/>
    <property type="match status" value="1"/>
</dbReference>
<dbReference type="Pfam" id="PF00042">
    <property type="entry name" value="Globin"/>
    <property type="match status" value="1"/>
</dbReference>
<dbReference type="PRINTS" id="PR00814">
    <property type="entry name" value="BETAHAEM"/>
</dbReference>
<dbReference type="SUPFAM" id="SSF46458">
    <property type="entry name" value="Globin-like"/>
    <property type="match status" value="1"/>
</dbReference>
<dbReference type="PROSITE" id="PS01033">
    <property type="entry name" value="GLOBIN"/>
    <property type="match status" value="1"/>
</dbReference>
<accession>Q28496</accession>
<reference key="1">
    <citation type="journal article" date="1995" name="J. Mol. Evol.">
        <title>Evidence on primate phylogeny from epsilon-globin gene sequences and flanking regions.</title>
        <authorList>
            <person name="Porter C.A."/>
            <person name="Sampaio I."/>
            <person name="Schneider H."/>
            <person name="Schneider M.P.C."/>
            <person name="Czelusniak J."/>
            <person name="Goodman M."/>
        </authorList>
    </citation>
    <scope>NUCLEOTIDE SEQUENCE [GENOMIC DNA]</scope>
</reference>
<comment type="function">
    <text>The epsilon chain is a beta-type chain of early mammalian embryonic hemoglobin.</text>
</comment>
<comment type="subunit">
    <text>Heterotetramer of two alpha chains and two epsilon chains in early embryonic hemoglobin Gower-2; two zeta chains and two epsilon chains in early embryonic hemoglobin Gower-1.</text>
</comment>
<comment type="tissue specificity">
    <text>Red blood cells.</text>
</comment>
<comment type="similarity">
    <text evidence="2">Belongs to the globin family.</text>
</comment>